<reference key="1">
    <citation type="submission" date="2004-02" db="EMBL/GenBank/DDBJ databases">
        <title>PCR product of Pichia pastoris cytochrome c gene.</title>
        <authorList>
            <person name="Hartner F.S."/>
            <person name="Kern A."/>
            <person name="Glieder A."/>
        </authorList>
    </citation>
    <scope>NUCLEOTIDE SEQUENCE [GENOMIC DNA]</scope>
</reference>
<name>CYC_PICPA</name>
<sequence length="110" mass="12068">MPAPFEKGSEKKGATLFKTRCLQCHTVEAGGPHKVGPNLHGVFGRKSGLAEGYSYTDANKRKGVEWSEQTMSDYLENPKKYIPGTKMAFGGLKKAKDRNDLITYLASATK</sequence>
<dbReference type="EMBL" id="AY559323">
    <property type="protein sequence ID" value="AAS67288.1"/>
    <property type="molecule type" value="Genomic_DNA"/>
</dbReference>
<dbReference type="SMR" id="Q6Q4H8"/>
<dbReference type="GO" id="GO:0005758">
    <property type="term" value="C:mitochondrial intermembrane space"/>
    <property type="evidence" value="ECO:0007669"/>
    <property type="project" value="UniProtKB-SubCell"/>
</dbReference>
<dbReference type="GO" id="GO:0009055">
    <property type="term" value="F:electron transfer activity"/>
    <property type="evidence" value="ECO:0007669"/>
    <property type="project" value="InterPro"/>
</dbReference>
<dbReference type="GO" id="GO:0020037">
    <property type="term" value="F:heme binding"/>
    <property type="evidence" value="ECO:0007669"/>
    <property type="project" value="InterPro"/>
</dbReference>
<dbReference type="GO" id="GO:0046872">
    <property type="term" value="F:metal ion binding"/>
    <property type="evidence" value="ECO:0007669"/>
    <property type="project" value="UniProtKB-KW"/>
</dbReference>
<dbReference type="FunFam" id="1.10.760.10:FF:000001">
    <property type="entry name" value="Cytochrome c iso-1"/>
    <property type="match status" value="1"/>
</dbReference>
<dbReference type="Gene3D" id="1.10.760.10">
    <property type="entry name" value="Cytochrome c-like domain"/>
    <property type="match status" value="1"/>
</dbReference>
<dbReference type="InterPro" id="IPR009056">
    <property type="entry name" value="Cyt_c-like_dom"/>
</dbReference>
<dbReference type="InterPro" id="IPR036909">
    <property type="entry name" value="Cyt_c-like_dom_sf"/>
</dbReference>
<dbReference type="InterPro" id="IPR002327">
    <property type="entry name" value="Cyt_c_1A/1B"/>
</dbReference>
<dbReference type="PANTHER" id="PTHR11961">
    <property type="entry name" value="CYTOCHROME C"/>
    <property type="match status" value="1"/>
</dbReference>
<dbReference type="Pfam" id="PF00034">
    <property type="entry name" value="Cytochrom_C"/>
    <property type="match status" value="1"/>
</dbReference>
<dbReference type="PRINTS" id="PR00604">
    <property type="entry name" value="CYTCHRMECIAB"/>
</dbReference>
<dbReference type="SUPFAM" id="SSF46626">
    <property type="entry name" value="Cytochrome c"/>
    <property type="match status" value="1"/>
</dbReference>
<dbReference type="PROSITE" id="PS51007">
    <property type="entry name" value="CYTC"/>
    <property type="match status" value="1"/>
</dbReference>
<gene>
    <name type="primary">CYC1</name>
</gene>
<keyword id="KW-0249">Electron transport</keyword>
<keyword id="KW-0349">Heme</keyword>
<keyword id="KW-0408">Iron</keyword>
<keyword id="KW-0479">Metal-binding</keyword>
<keyword id="KW-0488">Methylation</keyword>
<keyword id="KW-0496">Mitochondrion</keyword>
<keyword id="KW-0679">Respiratory chain</keyword>
<keyword id="KW-0813">Transport</keyword>
<proteinExistence type="inferred from homology"/>
<organism>
    <name type="scientific">Komagataella pastoris</name>
    <name type="common">Yeast</name>
    <name type="synonym">Pichia pastoris</name>
    <dbReference type="NCBI Taxonomy" id="4922"/>
    <lineage>
        <taxon>Eukaryota</taxon>
        <taxon>Fungi</taxon>
        <taxon>Dikarya</taxon>
        <taxon>Ascomycota</taxon>
        <taxon>Saccharomycotina</taxon>
        <taxon>Pichiomycetes</taxon>
        <taxon>Pichiales</taxon>
        <taxon>Pichiaceae</taxon>
        <taxon>Komagataella</taxon>
    </lineage>
</organism>
<protein>
    <recommendedName>
        <fullName>Cytochrome c</fullName>
    </recommendedName>
</protein>
<accession>Q6Q4H8</accession>
<comment type="function">
    <text evidence="1">Electron carrier protein. The oxidized form of the cytochrome c heme group can accept an electron from the heme group of the cytochrome c1 subunit of cytochrome reductase. Cytochrome c then transfers this electron to the cytochrome oxidase complex, the final protein carrier in the mitochondrial electron-transport chain (By similarity).</text>
</comment>
<comment type="subcellular location">
    <subcellularLocation>
        <location evidence="1">Mitochondrion intermembrane space</location>
    </subcellularLocation>
    <text evidence="1">Loosely associated with the inner membrane.</text>
</comment>
<comment type="PTM">
    <text evidence="1">Binds 1 heme c group covalently per subunit.</text>
</comment>
<comment type="similarity">
    <text evidence="3">Belongs to the cytochrome c family.</text>
</comment>
<comment type="online information" name="Protein Spotlight">
    <link uri="https://www.proteinspotlight.org/back_issues/076"/>
    <text>Life shuttle - Issue 76 of November 2006</text>
</comment>
<feature type="initiator methionine" description="Removed" evidence="1">
    <location>
        <position position="1"/>
    </location>
</feature>
<feature type="chain" id="PRO_0000108330" description="Cytochrome c">
    <location>
        <begin position="2"/>
        <end position="110"/>
    </location>
</feature>
<feature type="binding site" description="covalent" evidence="2">
    <location>
        <position position="21"/>
    </location>
    <ligand>
        <name>heme c</name>
        <dbReference type="ChEBI" id="CHEBI:61717"/>
    </ligand>
</feature>
<feature type="binding site" description="covalent" evidence="2">
    <location>
        <position position="24"/>
    </location>
    <ligand>
        <name>heme c</name>
        <dbReference type="ChEBI" id="CHEBI:61717"/>
    </ligand>
</feature>
<feature type="binding site" description="axial binding residue" evidence="2">
    <location>
        <position position="25"/>
    </location>
    <ligand>
        <name>heme c</name>
        <dbReference type="ChEBI" id="CHEBI:61717"/>
    </ligand>
    <ligandPart>
        <name>Fe</name>
        <dbReference type="ChEBI" id="CHEBI:18248"/>
    </ligandPart>
</feature>
<feature type="binding site" description="axial binding residue" evidence="2">
    <location>
        <position position="87"/>
    </location>
    <ligand>
        <name>heme c</name>
        <dbReference type="ChEBI" id="CHEBI:61717"/>
    </ligand>
    <ligandPart>
        <name>Fe</name>
        <dbReference type="ChEBI" id="CHEBI:18248"/>
    </ligandPart>
</feature>
<feature type="modified residue" description="N6,N6,N6-trimethyllysine" evidence="1">
    <location>
        <position position="79"/>
    </location>
</feature>
<evidence type="ECO:0000250" key="1"/>
<evidence type="ECO:0000255" key="2">
    <source>
        <dbReference type="PROSITE-ProRule" id="PRU00433"/>
    </source>
</evidence>
<evidence type="ECO:0000305" key="3"/>